<organism>
    <name type="scientific">Roseobacter denitrificans (strain ATCC 33942 / OCh 114)</name>
    <name type="common">Erythrobacter sp. (strain OCh 114)</name>
    <name type="synonym">Roseobacter denitrificans</name>
    <dbReference type="NCBI Taxonomy" id="375451"/>
    <lineage>
        <taxon>Bacteria</taxon>
        <taxon>Pseudomonadati</taxon>
        <taxon>Pseudomonadota</taxon>
        <taxon>Alphaproteobacteria</taxon>
        <taxon>Rhodobacterales</taxon>
        <taxon>Roseobacteraceae</taxon>
        <taxon>Roseobacter</taxon>
    </lineage>
</organism>
<accession>Q16CE6</accession>
<evidence type="ECO:0000255" key="1">
    <source>
        <dbReference type="HAMAP-Rule" id="MF_00003"/>
    </source>
</evidence>
<evidence type="ECO:0000256" key="2">
    <source>
        <dbReference type="SAM" id="MobiDB-lite"/>
    </source>
</evidence>
<keyword id="KW-0963">Cytoplasm</keyword>
<keyword id="KW-1185">Reference proteome</keyword>
<keyword id="KW-0690">Ribosome biogenesis</keyword>
<feature type="chain" id="PRO_0000321251" description="Ribosome-binding factor A">
    <location>
        <begin position="1"/>
        <end position="143"/>
    </location>
</feature>
<feature type="region of interest" description="Disordered" evidence="2">
    <location>
        <begin position="1"/>
        <end position="20"/>
    </location>
</feature>
<reference key="1">
    <citation type="journal article" date="2007" name="J. Bacteriol.">
        <title>The complete genome sequence of Roseobacter denitrificans reveals a mixotrophic rather than photosynthetic metabolism.</title>
        <authorList>
            <person name="Swingley W.D."/>
            <person name="Sadekar S."/>
            <person name="Mastrian S.D."/>
            <person name="Matthies H.J."/>
            <person name="Hao J."/>
            <person name="Ramos H."/>
            <person name="Acharya C.R."/>
            <person name="Conrad A.L."/>
            <person name="Taylor H.L."/>
            <person name="Dejesa L.C."/>
            <person name="Shah M.K."/>
            <person name="O'Huallachain M.E."/>
            <person name="Lince M.T."/>
            <person name="Blankenship R.E."/>
            <person name="Beatty J.T."/>
            <person name="Touchman J.W."/>
        </authorList>
    </citation>
    <scope>NUCLEOTIDE SEQUENCE [LARGE SCALE GENOMIC DNA]</scope>
    <source>
        <strain>ATCC 33942 / OCh 114</strain>
    </source>
</reference>
<sequence length="143" mass="15956">MRFMGKNKFHTGPGPSQRQLRVGETIRRALSDVLARGDVHDTDLNRLSVTVGEVRASPDLKIATAYVLPLGGQGKDEVIALLARNKGELRRLVAKKLTLKFAPDLRFQLDETFDRMDETREMLNRAEVKRDTGPVPAGESDTE</sequence>
<comment type="function">
    <text evidence="1">One of several proteins that assist in the late maturation steps of the functional core of the 30S ribosomal subunit. Associates with free 30S ribosomal subunits (but not with 30S subunits that are part of 70S ribosomes or polysomes). Required for efficient processing of 16S rRNA. May interact with the 5'-terminal helix region of 16S rRNA.</text>
</comment>
<comment type="subunit">
    <text evidence="1">Monomer. Binds 30S ribosomal subunits, but not 50S ribosomal subunits or 70S ribosomes.</text>
</comment>
<comment type="subcellular location">
    <subcellularLocation>
        <location evidence="1">Cytoplasm</location>
    </subcellularLocation>
</comment>
<comment type="similarity">
    <text evidence="1">Belongs to the RbfA family.</text>
</comment>
<name>RBFA_ROSDO</name>
<dbReference type="EMBL" id="CP000362">
    <property type="protein sequence ID" value="ABG30347.1"/>
    <property type="molecule type" value="Genomic_DNA"/>
</dbReference>
<dbReference type="SMR" id="Q16CE6"/>
<dbReference type="STRING" id="375451.RD1_0649"/>
<dbReference type="KEGG" id="rde:RD1_0649"/>
<dbReference type="eggNOG" id="COG0858">
    <property type="taxonomic scope" value="Bacteria"/>
</dbReference>
<dbReference type="HOGENOM" id="CLU_089475_1_0_5"/>
<dbReference type="Proteomes" id="UP000007029">
    <property type="component" value="Chromosome"/>
</dbReference>
<dbReference type="GO" id="GO:0005829">
    <property type="term" value="C:cytosol"/>
    <property type="evidence" value="ECO:0007669"/>
    <property type="project" value="TreeGrafter"/>
</dbReference>
<dbReference type="GO" id="GO:0043024">
    <property type="term" value="F:ribosomal small subunit binding"/>
    <property type="evidence" value="ECO:0007669"/>
    <property type="project" value="TreeGrafter"/>
</dbReference>
<dbReference type="GO" id="GO:0030490">
    <property type="term" value="P:maturation of SSU-rRNA"/>
    <property type="evidence" value="ECO:0007669"/>
    <property type="project" value="UniProtKB-UniRule"/>
</dbReference>
<dbReference type="Gene3D" id="3.30.300.20">
    <property type="match status" value="1"/>
</dbReference>
<dbReference type="HAMAP" id="MF_00003">
    <property type="entry name" value="RbfA"/>
    <property type="match status" value="1"/>
</dbReference>
<dbReference type="InterPro" id="IPR015946">
    <property type="entry name" value="KH_dom-like_a/b"/>
</dbReference>
<dbReference type="InterPro" id="IPR000238">
    <property type="entry name" value="RbfA"/>
</dbReference>
<dbReference type="InterPro" id="IPR023799">
    <property type="entry name" value="RbfA_dom_sf"/>
</dbReference>
<dbReference type="InterPro" id="IPR020053">
    <property type="entry name" value="Ribosome-bd_factorA_CS"/>
</dbReference>
<dbReference type="NCBIfam" id="NF001802">
    <property type="entry name" value="PRK00521.2-5"/>
    <property type="match status" value="1"/>
</dbReference>
<dbReference type="PANTHER" id="PTHR33515">
    <property type="entry name" value="RIBOSOME-BINDING FACTOR A, CHLOROPLASTIC-RELATED"/>
    <property type="match status" value="1"/>
</dbReference>
<dbReference type="PANTHER" id="PTHR33515:SF1">
    <property type="entry name" value="RIBOSOME-BINDING FACTOR A, CHLOROPLASTIC-RELATED"/>
    <property type="match status" value="1"/>
</dbReference>
<dbReference type="Pfam" id="PF02033">
    <property type="entry name" value="RBFA"/>
    <property type="match status" value="1"/>
</dbReference>
<dbReference type="SUPFAM" id="SSF89919">
    <property type="entry name" value="Ribosome-binding factor A, RbfA"/>
    <property type="match status" value="1"/>
</dbReference>
<dbReference type="PROSITE" id="PS01319">
    <property type="entry name" value="RBFA"/>
    <property type="match status" value="1"/>
</dbReference>
<gene>
    <name evidence="1" type="primary">rbfA</name>
    <name type="ordered locus">RD1_0649</name>
</gene>
<proteinExistence type="inferred from homology"/>
<protein>
    <recommendedName>
        <fullName evidence="1">Ribosome-binding factor A</fullName>
    </recommendedName>
</protein>